<organism>
    <name type="scientific">Rattus norvegicus</name>
    <name type="common">Rat</name>
    <dbReference type="NCBI Taxonomy" id="10116"/>
    <lineage>
        <taxon>Eukaryota</taxon>
        <taxon>Metazoa</taxon>
        <taxon>Chordata</taxon>
        <taxon>Craniata</taxon>
        <taxon>Vertebrata</taxon>
        <taxon>Euteleostomi</taxon>
        <taxon>Mammalia</taxon>
        <taxon>Eutheria</taxon>
        <taxon>Euarchontoglires</taxon>
        <taxon>Glires</taxon>
        <taxon>Rodentia</taxon>
        <taxon>Myomorpha</taxon>
        <taxon>Muroidea</taxon>
        <taxon>Muridae</taxon>
        <taxon>Murinae</taxon>
        <taxon>Rattus</taxon>
    </lineage>
</organism>
<reference key="1">
    <citation type="journal article" date="2004" name="Genome Res.">
        <title>The status, quality, and expansion of the NIH full-length cDNA project: the Mammalian Gene Collection (MGC).</title>
        <authorList>
            <consortium name="The MGC Project Team"/>
        </authorList>
    </citation>
    <scope>NUCLEOTIDE SEQUENCE [LARGE SCALE MRNA]</scope>
    <source>
        <tissue>Testis</tissue>
    </source>
</reference>
<protein>
    <recommendedName>
        <fullName>Suppressor of tumorigenicity 7 protein-like</fullName>
    </recommendedName>
</protein>
<keyword id="KW-0472">Membrane</keyword>
<keyword id="KW-1185">Reference proteome</keyword>
<keyword id="KW-0812">Transmembrane</keyword>
<keyword id="KW-1133">Transmembrane helix</keyword>
<feature type="chain" id="PRO_0000339229" description="Suppressor of tumorigenicity 7 protein-like">
    <location>
        <begin position="1"/>
        <end position="559"/>
    </location>
</feature>
<feature type="transmembrane region" description="Helical" evidence="1">
    <location>
        <begin position="39"/>
        <end position="59"/>
    </location>
</feature>
<feature type="transmembrane region" description="Helical" evidence="1">
    <location>
        <begin position="83"/>
        <end position="103"/>
    </location>
</feature>
<feature type="transmembrane region" description="Helical" evidence="1">
    <location>
        <begin position="513"/>
        <end position="533"/>
    </location>
</feature>
<proteinExistence type="evidence at transcript level"/>
<gene>
    <name type="primary">St7l</name>
</gene>
<dbReference type="EMBL" id="BC079194">
    <property type="protein sequence ID" value="AAH79194.1"/>
    <property type="molecule type" value="mRNA"/>
</dbReference>
<dbReference type="RefSeq" id="NP_001007640.1">
    <property type="nucleotide sequence ID" value="NM_001007639.1"/>
</dbReference>
<dbReference type="SMR" id="Q68FW3"/>
<dbReference type="FunCoup" id="Q68FW3">
    <property type="interactions" value="2184"/>
</dbReference>
<dbReference type="STRING" id="10116.ENSRNOP00000074200"/>
<dbReference type="PhosphoSitePlus" id="Q68FW3"/>
<dbReference type="PaxDb" id="10116-ENSRNOP00000019129"/>
<dbReference type="GeneID" id="295344"/>
<dbReference type="KEGG" id="rno:295344"/>
<dbReference type="UCSC" id="RGD:1359336">
    <property type="organism name" value="rat"/>
</dbReference>
<dbReference type="AGR" id="RGD:1359336"/>
<dbReference type="CTD" id="54879"/>
<dbReference type="RGD" id="1359336">
    <property type="gene designation" value="St7l"/>
</dbReference>
<dbReference type="VEuPathDB" id="HostDB:ENSRNOG00000014002"/>
<dbReference type="eggNOG" id="KOG3807">
    <property type="taxonomic scope" value="Eukaryota"/>
</dbReference>
<dbReference type="HOGENOM" id="CLU_035578_2_0_1"/>
<dbReference type="InParanoid" id="Q68FW3"/>
<dbReference type="OrthoDB" id="21125at9989"/>
<dbReference type="PhylomeDB" id="Q68FW3"/>
<dbReference type="TreeFam" id="TF314162"/>
<dbReference type="PRO" id="PR:Q68FW3"/>
<dbReference type="Proteomes" id="UP000002494">
    <property type="component" value="Chromosome 2"/>
</dbReference>
<dbReference type="Bgee" id="ENSRNOG00000014002">
    <property type="expression patterns" value="Expressed in cerebellum and 19 other cell types or tissues"/>
</dbReference>
<dbReference type="ExpressionAtlas" id="Q68FW3">
    <property type="expression patterns" value="baseline and differential"/>
</dbReference>
<dbReference type="GO" id="GO:0016020">
    <property type="term" value="C:membrane"/>
    <property type="evidence" value="ECO:0007669"/>
    <property type="project" value="UniProtKB-SubCell"/>
</dbReference>
<dbReference type="GO" id="GO:0030308">
    <property type="term" value="P:negative regulation of cell growth"/>
    <property type="evidence" value="ECO:0000266"/>
    <property type="project" value="RGD"/>
</dbReference>
<dbReference type="CDD" id="cd11557">
    <property type="entry name" value="ST7"/>
    <property type="match status" value="1"/>
</dbReference>
<dbReference type="InterPro" id="IPR007311">
    <property type="entry name" value="ST7"/>
</dbReference>
<dbReference type="PANTHER" id="PTHR12745">
    <property type="entry name" value="SUPPRESSION OF TUMORIGENICITY 7"/>
    <property type="match status" value="1"/>
</dbReference>
<dbReference type="PANTHER" id="PTHR12745:SF4">
    <property type="entry name" value="SUPPRESSOR OF TUMORIGENICITY 7 PROTEIN-LIKE"/>
    <property type="match status" value="1"/>
</dbReference>
<dbReference type="Pfam" id="PF04184">
    <property type="entry name" value="ST7"/>
    <property type="match status" value="1"/>
</dbReference>
<evidence type="ECO:0000255" key="1"/>
<evidence type="ECO:0000305" key="2"/>
<name>ST7L_RAT</name>
<comment type="subcellular location">
    <subcellularLocation>
        <location evidence="2">Membrane</location>
        <topology evidence="2">Multi-pass membrane protein</topology>
    </subcellularLocation>
</comment>
<comment type="similarity">
    <text evidence="2">Belongs to the ST7 family.</text>
</comment>
<sequence>MADGDYFAEAARAVGCPHAPVPGLGLGPPLGWKERLKAGLANSGSTLWFLAGLGLLYALRVPLRLCDNVTAVTGFLSSLTPKFYVALTGTSSLISGLIFIFEWWYFHKHGTSFIEQVSISHLRPLMGGTESSISEPGSPANSRESETLRHHHLSECKVWRNPLNLFRGAEYRRYTWVTGKEPLTYYDMNLSAQDHQTFFTCETDFLRPSDTVMQKAWRERNPPARIKAAYQALELNNDCATAYVLLAEEEATTIVDAERLFKQALRAGEIIYRRSQQCQHQSPQHEAQLRRDTNVLVYIKRRLAMCARKLGRIREAVKIMRDLMKEFPPLTMLNIHENLLESLLELQAYADVQAVLAKYDDISLPKSAAICYTAALLKTRTVSDKFSPETAFRKGLSTAEINAVEAIHRAVEFNPHVPKYLLEMKSLILPPEHILKRGDSEAIAYAFFHLQHWKRIEGALNLLQCTWEGTFRMIPYPLEKGHLFYPYPSCTETADRELLPTFHHVSVYPKKELPFFIHFTAGLCSSTAMIALLTHQFPEVMGVFAKAVSMISRTCVEYL</sequence>
<accession>Q68FW3</accession>